<proteinExistence type="evidence at protein level"/>
<reference key="1">
    <citation type="journal article" date="1999" name="J. Immunol.">
        <title>AND-34, a novel p130Cas-binding thymic stromal cell protein regulated by adhesion and inflammatory cytokines.</title>
        <authorList>
            <person name="Cai D."/>
            <person name="Clayton L.K."/>
            <person name="Smolyar A."/>
            <person name="Lerner A."/>
        </authorList>
    </citation>
    <scope>NUCLEOTIDE SEQUENCE [MRNA] (ISOFORM 1)</scope>
    <scope>TISSUE SPECIFICITY</scope>
    <scope>PHOSPHORYLATION</scope>
    <scope>INTERACTION WITH BCAR1</scope>
    <scope>INDUCTION BY INTERLEUKIN-1-BETA AND TNF-ALPHA</scope>
    <source>
        <strain>C57BL/6J</strain>
    </source>
</reference>
<reference key="2">
    <citation type="journal article" date="2005" name="Science">
        <title>The transcriptional landscape of the mammalian genome.</title>
        <authorList>
            <person name="Carninci P."/>
            <person name="Kasukawa T."/>
            <person name="Katayama S."/>
            <person name="Gough J."/>
            <person name="Frith M.C."/>
            <person name="Maeda N."/>
            <person name="Oyama R."/>
            <person name="Ravasi T."/>
            <person name="Lenhard B."/>
            <person name="Wells C."/>
            <person name="Kodzius R."/>
            <person name="Shimokawa K."/>
            <person name="Bajic V.B."/>
            <person name="Brenner S.E."/>
            <person name="Batalov S."/>
            <person name="Forrest A.R."/>
            <person name="Zavolan M."/>
            <person name="Davis M.J."/>
            <person name="Wilming L.G."/>
            <person name="Aidinis V."/>
            <person name="Allen J.E."/>
            <person name="Ambesi-Impiombato A."/>
            <person name="Apweiler R."/>
            <person name="Aturaliya R.N."/>
            <person name="Bailey T.L."/>
            <person name="Bansal M."/>
            <person name="Baxter L."/>
            <person name="Beisel K.W."/>
            <person name="Bersano T."/>
            <person name="Bono H."/>
            <person name="Chalk A.M."/>
            <person name="Chiu K.P."/>
            <person name="Choudhary V."/>
            <person name="Christoffels A."/>
            <person name="Clutterbuck D.R."/>
            <person name="Crowe M.L."/>
            <person name="Dalla E."/>
            <person name="Dalrymple B.P."/>
            <person name="de Bono B."/>
            <person name="Della Gatta G."/>
            <person name="di Bernardo D."/>
            <person name="Down T."/>
            <person name="Engstrom P."/>
            <person name="Fagiolini M."/>
            <person name="Faulkner G."/>
            <person name="Fletcher C.F."/>
            <person name="Fukushima T."/>
            <person name="Furuno M."/>
            <person name="Futaki S."/>
            <person name="Gariboldi M."/>
            <person name="Georgii-Hemming P."/>
            <person name="Gingeras T.R."/>
            <person name="Gojobori T."/>
            <person name="Green R.E."/>
            <person name="Gustincich S."/>
            <person name="Harbers M."/>
            <person name="Hayashi Y."/>
            <person name="Hensch T.K."/>
            <person name="Hirokawa N."/>
            <person name="Hill D."/>
            <person name="Huminiecki L."/>
            <person name="Iacono M."/>
            <person name="Ikeo K."/>
            <person name="Iwama A."/>
            <person name="Ishikawa T."/>
            <person name="Jakt M."/>
            <person name="Kanapin A."/>
            <person name="Katoh M."/>
            <person name="Kawasawa Y."/>
            <person name="Kelso J."/>
            <person name="Kitamura H."/>
            <person name="Kitano H."/>
            <person name="Kollias G."/>
            <person name="Krishnan S.P."/>
            <person name="Kruger A."/>
            <person name="Kummerfeld S.K."/>
            <person name="Kurochkin I.V."/>
            <person name="Lareau L.F."/>
            <person name="Lazarevic D."/>
            <person name="Lipovich L."/>
            <person name="Liu J."/>
            <person name="Liuni S."/>
            <person name="McWilliam S."/>
            <person name="Madan Babu M."/>
            <person name="Madera M."/>
            <person name="Marchionni L."/>
            <person name="Matsuda H."/>
            <person name="Matsuzawa S."/>
            <person name="Miki H."/>
            <person name="Mignone F."/>
            <person name="Miyake S."/>
            <person name="Morris K."/>
            <person name="Mottagui-Tabar S."/>
            <person name="Mulder N."/>
            <person name="Nakano N."/>
            <person name="Nakauchi H."/>
            <person name="Ng P."/>
            <person name="Nilsson R."/>
            <person name="Nishiguchi S."/>
            <person name="Nishikawa S."/>
            <person name="Nori F."/>
            <person name="Ohara O."/>
            <person name="Okazaki Y."/>
            <person name="Orlando V."/>
            <person name="Pang K.C."/>
            <person name="Pavan W.J."/>
            <person name="Pavesi G."/>
            <person name="Pesole G."/>
            <person name="Petrovsky N."/>
            <person name="Piazza S."/>
            <person name="Reed J."/>
            <person name="Reid J.F."/>
            <person name="Ring B.Z."/>
            <person name="Ringwald M."/>
            <person name="Rost B."/>
            <person name="Ruan Y."/>
            <person name="Salzberg S.L."/>
            <person name="Sandelin A."/>
            <person name="Schneider C."/>
            <person name="Schoenbach C."/>
            <person name="Sekiguchi K."/>
            <person name="Semple C.A."/>
            <person name="Seno S."/>
            <person name="Sessa L."/>
            <person name="Sheng Y."/>
            <person name="Shibata Y."/>
            <person name="Shimada H."/>
            <person name="Shimada K."/>
            <person name="Silva D."/>
            <person name="Sinclair B."/>
            <person name="Sperling S."/>
            <person name="Stupka E."/>
            <person name="Sugiura K."/>
            <person name="Sultana R."/>
            <person name="Takenaka Y."/>
            <person name="Taki K."/>
            <person name="Tammoja K."/>
            <person name="Tan S.L."/>
            <person name="Tang S."/>
            <person name="Taylor M.S."/>
            <person name="Tegner J."/>
            <person name="Teichmann S.A."/>
            <person name="Ueda H.R."/>
            <person name="van Nimwegen E."/>
            <person name="Verardo R."/>
            <person name="Wei C.L."/>
            <person name="Yagi K."/>
            <person name="Yamanishi H."/>
            <person name="Zabarovsky E."/>
            <person name="Zhu S."/>
            <person name="Zimmer A."/>
            <person name="Hide W."/>
            <person name="Bult C."/>
            <person name="Grimmond S.M."/>
            <person name="Teasdale R.D."/>
            <person name="Liu E.T."/>
            <person name="Brusic V."/>
            <person name="Quackenbush J."/>
            <person name="Wahlestedt C."/>
            <person name="Mattick J.S."/>
            <person name="Hume D.A."/>
            <person name="Kai C."/>
            <person name="Sasaki D."/>
            <person name="Tomaru Y."/>
            <person name="Fukuda S."/>
            <person name="Kanamori-Katayama M."/>
            <person name="Suzuki M."/>
            <person name="Aoki J."/>
            <person name="Arakawa T."/>
            <person name="Iida J."/>
            <person name="Imamura K."/>
            <person name="Itoh M."/>
            <person name="Kato T."/>
            <person name="Kawaji H."/>
            <person name="Kawagashira N."/>
            <person name="Kawashima T."/>
            <person name="Kojima M."/>
            <person name="Kondo S."/>
            <person name="Konno H."/>
            <person name="Nakano K."/>
            <person name="Ninomiya N."/>
            <person name="Nishio T."/>
            <person name="Okada M."/>
            <person name="Plessy C."/>
            <person name="Shibata K."/>
            <person name="Shiraki T."/>
            <person name="Suzuki S."/>
            <person name="Tagami M."/>
            <person name="Waki K."/>
            <person name="Watahiki A."/>
            <person name="Okamura-Oho Y."/>
            <person name="Suzuki H."/>
            <person name="Kawai J."/>
            <person name="Hayashizaki Y."/>
        </authorList>
    </citation>
    <scope>NUCLEOTIDE SEQUENCE [LARGE SCALE MRNA] (ISOFORMS 1 AND 2)</scope>
    <source>
        <strain>C57BL/6J</strain>
        <tissue>Kidney</tissue>
    </source>
</reference>
<reference key="3">
    <citation type="journal article" date="2004" name="Genome Res.">
        <title>The status, quality, and expansion of the NIH full-length cDNA project: the Mammalian Gene Collection (MGC).</title>
        <authorList>
            <consortium name="The MGC Project Team"/>
        </authorList>
    </citation>
    <scope>NUCLEOTIDE SEQUENCE [LARGE SCALE MRNA] (ISOFORM 1)</scope>
    <source>
        <strain>FVB/N</strain>
        <tissue>Mammary tumor</tissue>
    </source>
</reference>
<reference key="4">
    <citation type="journal article" date="2000" name="J. Biol. Chem.">
        <title>p130Cas regulates the activity of AND-34, a novel Ral, Rap1, and R-Ras guanine nucleotide exchange factor.</title>
        <authorList>
            <person name="Gotoh T."/>
            <person name="Cai D."/>
            <person name="Tian X."/>
            <person name="Feig L.A."/>
            <person name="Lerner A."/>
        </authorList>
    </citation>
    <scope>FUNCTION IN GTPASES ACTIVATION</scope>
    <scope>INTERACTION WITH BCAR1; PTK2/FAK1 AND PTPN1</scope>
</reference>
<reference key="5">
    <citation type="journal article" date="2003" name="J. Immunol.">
        <title>The GDP exchange factor AND-34 is expressed in B cells, associates with HEF1, and activates Cdc42.</title>
        <authorList>
            <person name="Cai D."/>
            <person name="Felekkis K.N."/>
            <person name="Near R.I."/>
            <person name="O'Neill G.M."/>
            <person name="van Seventer J.M."/>
            <person name="Golemis E.A."/>
            <person name="Lerner A."/>
        </authorList>
    </citation>
    <scope>TISSUE SPECIFICITY</scope>
    <scope>INTERACTION WITH NEDD9 AND BCAR1</scope>
</reference>
<reference key="6">
    <citation type="journal article" date="2009" name="J. Mol. Biol.">
        <title>Structural insights into the association between BCAR3 and Cas family members, an atypical complex implicated in anti-oestrogen resistance.</title>
        <authorList>
            <person name="Garron M.L."/>
            <person name="Arsenieva D."/>
            <person name="Zhong J."/>
            <person name="Bloom A.B."/>
            <person name="Lerner A."/>
            <person name="O'Neill G.M."/>
            <person name="Arold S.T."/>
        </authorList>
    </citation>
    <scope>INTERACTION WITH NEDD9</scope>
    <scope>MUTAGENESIS OF GLU-733 AND ARG-743</scope>
</reference>
<reference key="7">
    <citation type="journal article" date="2009" name="Mol. Vis.">
        <title>Loss of AND-34/BCAR3 expression in mice results in rupture of the adult lens.</title>
        <authorList>
            <person name="Near R.I."/>
            <person name="Smith R.S."/>
            <person name="Toselli P.A."/>
            <person name="Freddo T.F."/>
            <person name="Bloom A.B."/>
            <person name="Vanden Borre P."/>
            <person name="Seldin D.C."/>
            <person name="Lerner A."/>
        </authorList>
    </citation>
    <scope>FUNCTION</scope>
    <scope>TISSUE SPECIFICITY</scope>
    <scope>DISRUPTION PHENOTYPE</scope>
</reference>
<reference key="8">
    <citation type="journal article" date="2010" name="Cell">
        <title>A tissue-specific atlas of mouse protein phosphorylation and expression.</title>
        <authorList>
            <person name="Huttlin E.L."/>
            <person name="Jedrychowski M.P."/>
            <person name="Elias J.E."/>
            <person name="Goswami T."/>
            <person name="Rad R."/>
            <person name="Beausoleil S.A."/>
            <person name="Villen J."/>
            <person name="Haas W."/>
            <person name="Sowa M.E."/>
            <person name="Gygi S.P."/>
        </authorList>
    </citation>
    <scope>PHOSPHORYLATION [LARGE SCALE ANALYSIS] AT SER-370 AND SER-466</scope>
    <scope>IDENTIFICATION BY MASS SPECTROMETRY [LARGE SCALE ANALYSIS]</scope>
    <source>
        <tissue>Kidney</tissue>
        <tissue>Lung</tissue>
    </source>
</reference>
<reference key="9">
    <citation type="journal article" date="2012" name="Mol. Cell. Biol.">
        <title>Protein tyrosine phosphatase alpha phosphotyrosyl-789 binds BCAR3 to position Cas for activation at integrin-mediated focal adhesions.</title>
        <authorList>
            <person name="Sun G."/>
            <person name="Cheng S.Y."/>
            <person name="Chen M."/>
            <person name="Lim C.J."/>
            <person name="Pallen C.J."/>
        </authorList>
    </citation>
    <scope>FUNCTION</scope>
    <scope>IDENTIFICATION IN A COMPLEX WITH PTPRA; BCAR1 AND SRC</scope>
    <scope>SUBCELLULAR LOCATION</scope>
    <scope>DOMAIN</scope>
</reference>
<reference key="10">
    <citation type="journal article" date="2014" name="Breast Cancer Res.">
        <title>Breast cancer anti-estrogen resistance 3 inhibits transforming growth factor beta/Smad signaling and associates with favorable breast cancer disease outcomes.</title>
        <authorList>
            <person name="Guo J."/>
            <person name="Canaff L."/>
            <person name="Rajadurai C.V."/>
            <person name="Fils-Aime N."/>
            <person name="Tian J."/>
            <person name="Dai M."/>
            <person name="Korah J."/>
            <person name="Villatoro M."/>
            <person name="Park M."/>
            <person name="Ali S."/>
            <person name="Lebrun J.J."/>
        </authorList>
    </citation>
    <scope>FUNCTION</scope>
    <scope>SUBCELLULAR LOCATION</scope>
</reference>
<accession>Q9QZK2</accession>
<accession>Q3TNC9</accession>
<accession>Q3UP10</accession>
<name>BCAR3_MOUSE</name>
<evidence type="ECO:0000250" key="1">
    <source>
        <dbReference type="UniProtKB" id="D3ZAZ5"/>
    </source>
</evidence>
<evidence type="ECO:0000250" key="2">
    <source>
        <dbReference type="UniProtKB" id="O75815"/>
    </source>
</evidence>
<evidence type="ECO:0000255" key="3">
    <source>
        <dbReference type="PROSITE-ProRule" id="PRU00168"/>
    </source>
</evidence>
<evidence type="ECO:0000255" key="4">
    <source>
        <dbReference type="PROSITE-ProRule" id="PRU00191"/>
    </source>
</evidence>
<evidence type="ECO:0000256" key="5">
    <source>
        <dbReference type="SAM" id="MobiDB-lite"/>
    </source>
</evidence>
<evidence type="ECO:0000269" key="6">
    <source>
    </source>
</evidence>
<evidence type="ECO:0000269" key="7">
    <source>
    </source>
</evidence>
<evidence type="ECO:0000269" key="8">
    <source>
    </source>
</evidence>
<evidence type="ECO:0000269" key="9">
    <source>
    </source>
</evidence>
<evidence type="ECO:0000269" key="10">
    <source>
    </source>
</evidence>
<evidence type="ECO:0000269" key="11">
    <source>
    </source>
</evidence>
<evidence type="ECO:0000269" key="12">
    <source>
    </source>
</evidence>
<evidence type="ECO:0000303" key="13">
    <source>
    </source>
</evidence>
<evidence type="ECO:0000305" key="14"/>
<evidence type="ECO:0007744" key="15">
    <source>
    </source>
</evidence>
<protein>
    <recommendedName>
        <fullName>Breast cancer anti-estrogen resistance protein 3 homolog</fullName>
    </recommendedName>
    <alternativeName>
        <fullName>p130Cas-binding protein AND-34</fullName>
    </alternativeName>
</protein>
<keyword id="KW-0007">Acetylation</keyword>
<keyword id="KW-0025">Alternative splicing</keyword>
<keyword id="KW-0965">Cell junction</keyword>
<keyword id="KW-0963">Cytoplasm</keyword>
<keyword id="KW-0344">Guanine-nucleotide releasing factor</keyword>
<keyword id="KW-0488">Methylation</keyword>
<keyword id="KW-0597">Phosphoprotein</keyword>
<keyword id="KW-1185">Reference proteome</keyword>
<keyword id="KW-0727">SH2 domain</keyword>
<feature type="initiator methionine" description="Removed" evidence="2">
    <location>
        <position position="1"/>
    </location>
</feature>
<feature type="chain" id="PRO_0000230286" description="Breast cancer anti-estrogen resistance protein 3 homolog">
    <location>
        <begin position="2"/>
        <end position="820"/>
    </location>
</feature>
<feature type="domain" description="SH2" evidence="4">
    <location>
        <begin position="148"/>
        <end position="247"/>
    </location>
</feature>
<feature type="domain" description="Ras-GEF" evidence="3">
    <location>
        <begin position="543"/>
        <end position="813"/>
    </location>
</feature>
<feature type="region of interest" description="Disordered" evidence="5">
    <location>
        <begin position="40"/>
        <end position="81"/>
    </location>
</feature>
<feature type="region of interest" description="Disordered" evidence="5">
    <location>
        <begin position="346"/>
        <end position="367"/>
    </location>
</feature>
<feature type="region of interest" description="Mediates the interaction with BCAR1/p130CAS" evidence="2">
    <location>
        <begin position="739"/>
        <end position="743"/>
    </location>
</feature>
<feature type="site" description="Required for interaction with NEDD9" evidence="9">
    <location>
        <position position="743"/>
    </location>
</feature>
<feature type="modified residue" description="N-acetylalanine" evidence="2">
    <location>
        <position position="2"/>
    </location>
</feature>
<feature type="modified residue" description="Phosphoserine" evidence="2">
    <location>
        <position position="32"/>
    </location>
</feature>
<feature type="modified residue" description="Phosphoserine" evidence="2">
    <location>
        <position position="72"/>
    </location>
</feature>
<feature type="modified residue" description="Phosphoserine" evidence="2">
    <location>
        <position position="77"/>
    </location>
</feature>
<feature type="modified residue" description="Phosphoserine" evidence="2">
    <location>
        <position position="176"/>
    </location>
</feature>
<feature type="modified residue" description="Phosphoserine" evidence="2">
    <location>
        <position position="284"/>
    </location>
</feature>
<feature type="modified residue" description="N6-methyllysine" evidence="2">
    <location>
        <position position="329"/>
    </location>
</feature>
<feature type="modified residue" description="Phosphoserine" evidence="2">
    <location>
        <position position="353"/>
    </location>
</feature>
<feature type="modified residue" description="Phosphoserine" evidence="2">
    <location>
        <position position="358"/>
    </location>
</feature>
<feature type="modified residue" description="Phosphoserine" evidence="15">
    <location>
        <position position="370"/>
    </location>
</feature>
<feature type="modified residue" description="Omega-N-methylarginine" evidence="2">
    <location>
        <position position="437"/>
    </location>
</feature>
<feature type="modified residue" description="Phosphoserine" evidence="15">
    <location>
        <position position="466"/>
    </location>
</feature>
<feature type="splice variant" id="VSP_017815" description="In isoform 2." evidence="13">
    <location>
        <begin position="1"/>
        <end position="120"/>
    </location>
</feature>
<feature type="mutagenesis site" description="No effect on interaction with NEDD9." evidence="9">
    <original>E</original>
    <variation>A</variation>
    <location>
        <position position="733"/>
    </location>
</feature>
<feature type="mutagenesis site" description="Abolishes interaction with NEDD9." evidence="9">
    <original>R</original>
    <variation>A</variation>
    <location>
        <position position="743"/>
    </location>
</feature>
<feature type="sequence conflict" description="In Ref. 2; BAE25587." evidence="14" ref="2">
    <original>E</original>
    <variation>G</variation>
    <location>
        <position position="36"/>
    </location>
</feature>
<feature type="sequence conflict" description="In Ref. 2; BAE25587." evidence="14" ref="2">
    <original>K</original>
    <variation>E</variation>
    <location>
        <position position="525"/>
    </location>
</feature>
<feature type="sequence conflict" description="In Ref. 2; BAE38160." evidence="14" ref="2">
    <original>R</original>
    <variation>G</variation>
    <location>
        <position position="795"/>
    </location>
</feature>
<dbReference type="EMBL" id="AF179566">
    <property type="protein sequence ID" value="AAD53182.1"/>
    <property type="molecule type" value="mRNA"/>
</dbReference>
<dbReference type="EMBL" id="AK143894">
    <property type="protein sequence ID" value="BAE25587.1"/>
    <property type="molecule type" value="mRNA"/>
</dbReference>
<dbReference type="EMBL" id="AK165396">
    <property type="protein sequence ID" value="BAE38160.1"/>
    <property type="molecule type" value="mRNA"/>
</dbReference>
<dbReference type="EMBL" id="BC023930">
    <property type="protein sequence ID" value="AAH23930.1"/>
    <property type="molecule type" value="mRNA"/>
</dbReference>
<dbReference type="CCDS" id="CCDS17810.1">
    <molecule id="Q9QZK2-1"/>
</dbReference>
<dbReference type="RefSeq" id="NP_038895.1">
    <molecule id="Q9QZK2-1"/>
    <property type="nucleotide sequence ID" value="NM_013867.3"/>
</dbReference>
<dbReference type="SMR" id="Q9QZK2"/>
<dbReference type="BioGRID" id="205895">
    <property type="interactions" value="1"/>
</dbReference>
<dbReference type="FunCoup" id="Q9QZK2">
    <property type="interactions" value="82"/>
</dbReference>
<dbReference type="STRING" id="10090.ENSMUSP00000029766"/>
<dbReference type="GlyGen" id="Q9QZK2">
    <property type="glycosylation" value="2 sites, 2 N-linked glycans (2 sites)"/>
</dbReference>
<dbReference type="iPTMnet" id="Q9QZK2"/>
<dbReference type="PhosphoSitePlus" id="Q9QZK2"/>
<dbReference type="PaxDb" id="10090-ENSMUSP00000029766"/>
<dbReference type="PeptideAtlas" id="Q9QZK2"/>
<dbReference type="ProteomicsDB" id="273443">
    <molecule id="Q9QZK2-1"/>
</dbReference>
<dbReference type="ProteomicsDB" id="273444">
    <molecule id="Q9QZK2-2"/>
</dbReference>
<dbReference type="Antibodypedia" id="2973">
    <property type="antibodies" value="168 antibodies from 33 providers"/>
</dbReference>
<dbReference type="Ensembl" id="ENSMUST00000029766.9">
    <molecule id="Q9QZK2-1"/>
    <property type="protein sequence ID" value="ENSMUSP00000029766.5"/>
    <property type="gene ID" value="ENSMUSG00000028121.9"/>
</dbReference>
<dbReference type="GeneID" id="29815"/>
<dbReference type="KEGG" id="mmu:29815"/>
<dbReference type="UCSC" id="uc008req.2">
    <molecule id="Q9QZK2-1"/>
    <property type="organism name" value="mouse"/>
</dbReference>
<dbReference type="AGR" id="MGI:1352501"/>
<dbReference type="CTD" id="8412"/>
<dbReference type="MGI" id="MGI:1352501">
    <property type="gene designation" value="Bcar3"/>
</dbReference>
<dbReference type="VEuPathDB" id="HostDB:ENSMUSG00000028121"/>
<dbReference type="eggNOG" id="ENOG502QPX3">
    <property type="taxonomic scope" value="Eukaryota"/>
</dbReference>
<dbReference type="GeneTree" id="ENSGT00940000154130"/>
<dbReference type="HOGENOM" id="CLU_015281_0_0_1"/>
<dbReference type="InParanoid" id="Q9QZK2"/>
<dbReference type="OMA" id="MDPAMEY"/>
<dbReference type="OrthoDB" id="2412973at2759"/>
<dbReference type="PhylomeDB" id="Q9QZK2"/>
<dbReference type="TreeFam" id="TF323756"/>
<dbReference type="BioGRID-ORCS" id="29815">
    <property type="hits" value="2 hits in 78 CRISPR screens"/>
</dbReference>
<dbReference type="ChiTaRS" id="Bcar3">
    <property type="organism name" value="mouse"/>
</dbReference>
<dbReference type="PRO" id="PR:Q9QZK2"/>
<dbReference type="Proteomes" id="UP000000589">
    <property type="component" value="Chromosome 3"/>
</dbReference>
<dbReference type="RNAct" id="Q9QZK2">
    <property type="molecule type" value="protein"/>
</dbReference>
<dbReference type="Bgee" id="ENSMUSG00000028121">
    <property type="expression patterns" value="Expressed in primary oocyte and 239 other cell types or tissues"/>
</dbReference>
<dbReference type="ExpressionAtlas" id="Q9QZK2">
    <property type="expression patterns" value="baseline and differential"/>
</dbReference>
<dbReference type="GO" id="GO:0005737">
    <property type="term" value="C:cytoplasm"/>
    <property type="evidence" value="ECO:0007669"/>
    <property type="project" value="UniProtKB-SubCell"/>
</dbReference>
<dbReference type="GO" id="GO:0005925">
    <property type="term" value="C:focal adhesion"/>
    <property type="evidence" value="ECO:0000315"/>
    <property type="project" value="UniProtKB"/>
</dbReference>
<dbReference type="GO" id="GO:0016020">
    <property type="term" value="C:membrane"/>
    <property type="evidence" value="ECO:0000315"/>
    <property type="project" value="UniProtKB"/>
</dbReference>
<dbReference type="GO" id="GO:0005085">
    <property type="term" value="F:guanyl-nucleotide exchange factor activity"/>
    <property type="evidence" value="ECO:0007669"/>
    <property type="project" value="UniProtKB-KW"/>
</dbReference>
<dbReference type="GO" id="GO:0019900">
    <property type="term" value="F:kinase binding"/>
    <property type="evidence" value="ECO:0007669"/>
    <property type="project" value="Ensembl"/>
</dbReference>
<dbReference type="GO" id="GO:0001784">
    <property type="term" value="F:phosphotyrosine residue binding"/>
    <property type="evidence" value="ECO:0000250"/>
    <property type="project" value="UniProtKB"/>
</dbReference>
<dbReference type="GO" id="GO:0086100">
    <property type="term" value="P:endothelin receptor signaling pathway"/>
    <property type="evidence" value="ECO:0000250"/>
    <property type="project" value="UniProtKB"/>
</dbReference>
<dbReference type="GO" id="GO:0007173">
    <property type="term" value="P:epidermal growth factor receptor signaling pathway"/>
    <property type="evidence" value="ECO:0000250"/>
    <property type="project" value="UniProtKB"/>
</dbReference>
<dbReference type="GO" id="GO:0008286">
    <property type="term" value="P:insulin receptor signaling pathway"/>
    <property type="evidence" value="ECO:0000250"/>
    <property type="project" value="UniProtKB"/>
</dbReference>
<dbReference type="GO" id="GO:0002089">
    <property type="term" value="P:lens morphogenesis in camera-type eye"/>
    <property type="evidence" value="ECO:0000315"/>
    <property type="project" value="MGI"/>
</dbReference>
<dbReference type="GO" id="GO:0008284">
    <property type="term" value="P:positive regulation of cell population proliferation"/>
    <property type="evidence" value="ECO:0000250"/>
    <property type="project" value="UniProtKB"/>
</dbReference>
<dbReference type="GO" id="GO:0043547">
    <property type="term" value="P:positive regulation of GTPase activity"/>
    <property type="evidence" value="ECO:0000250"/>
    <property type="project" value="UniProtKB"/>
</dbReference>
<dbReference type="GO" id="GO:0043410">
    <property type="term" value="P:positive regulation of MAPK cascade"/>
    <property type="evidence" value="ECO:0000250"/>
    <property type="project" value="UniProtKB"/>
</dbReference>
<dbReference type="GO" id="GO:0007264">
    <property type="term" value="P:small GTPase-mediated signal transduction"/>
    <property type="evidence" value="ECO:0007669"/>
    <property type="project" value="InterPro"/>
</dbReference>
<dbReference type="CDD" id="cd10337">
    <property type="entry name" value="SH2_BCAR3"/>
    <property type="match status" value="1"/>
</dbReference>
<dbReference type="FunFam" id="1.10.840.10:FF:000007">
    <property type="entry name" value="SH2 domain containing 3C (Predicted)"/>
    <property type="match status" value="1"/>
</dbReference>
<dbReference type="FunFam" id="3.30.505.10:FF:000013">
    <property type="entry name" value="SH2 domain-containing protein 3C isoform X1"/>
    <property type="match status" value="1"/>
</dbReference>
<dbReference type="Gene3D" id="1.10.840.10">
    <property type="entry name" value="Ras guanine-nucleotide exchange factors catalytic domain"/>
    <property type="match status" value="1"/>
</dbReference>
<dbReference type="Gene3D" id="3.30.505.10">
    <property type="entry name" value="SH2 domain"/>
    <property type="match status" value="1"/>
</dbReference>
<dbReference type="InterPro" id="IPR023578">
    <property type="entry name" value="Ras_GEF_dom_sf"/>
</dbReference>
<dbReference type="InterPro" id="IPR001895">
    <property type="entry name" value="RASGEF_cat_dom"/>
</dbReference>
<dbReference type="InterPro" id="IPR036964">
    <property type="entry name" value="RASGEF_cat_dom_sf"/>
</dbReference>
<dbReference type="InterPro" id="IPR000980">
    <property type="entry name" value="SH2"/>
</dbReference>
<dbReference type="InterPro" id="IPR051853">
    <property type="entry name" value="SH2-Ras-GEF_adapter"/>
</dbReference>
<dbReference type="InterPro" id="IPR036860">
    <property type="entry name" value="SH2_dom_sf"/>
</dbReference>
<dbReference type="InterPro" id="IPR044102">
    <property type="entry name" value="SH2_SHEP1/BCAR3/NSP1"/>
</dbReference>
<dbReference type="PANTHER" id="PTHR14247:SF10">
    <property type="entry name" value="BREAST CANCER ANTI-ESTROGEN RESISTANCE PROTEIN 3"/>
    <property type="match status" value="1"/>
</dbReference>
<dbReference type="PANTHER" id="PTHR14247">
    <property type="entry name" value="BREAST CANCER ANTI-ESTROGEN RESISTANCE PROTEIN 3 HOMOLOG-LIKE PROTEIN"/>
    <property type="match status" value="1"/>
</dbReference>
<dbReference type="Pfam" id="PF00617">
    <property type="entry name" value="RasGEF"/>
    <property type="match status" value="1"/>
</dbReference>
<dbReference type="Pfam" id="PF00017">
    <property type="entry name" value="SH2"/>
    <property type="match status" value="1"/>
</dbReference>
<dbReference type="SMART" id="SM00147">
    <property type="entry name" value="RasGEF"/>
    <property type="match status" value="1"/>
</dbReference>
<dbReference type="SMART" id="SM00252">
    <property type="entry name" value="SH2"/>
    <property type="match status" value="1"/>
</dbReference>
<dbReference type="SUPFAM" id="SSF48366">
    <property type="entry name" value="Ras GEF"/>
    <property type="match status" value="1"/>
</dbReference>
<dbReference type="SUPFAM" id="SSF55550">
    <property type="entry name" value="SH2 domain"/>
    <property type="match status" value="1"/>
</dbReference>
<dbReference type="PROSITE" id="PS50009">
    <property type="entry name" value="RASGEF_CAT"/>
    <property type="match status" value="1"/>
</dbReference>
<dbReference type="PROSITE" id="PS50001">
    <property type="entry name" value="SH2"/>
    <property type="match status" value="1"/>
</dbReference>
<gene>
    <name type="primary">Bcar3</name>
    <name type="synonym">And34</name>
</gene>
<sequence length="820" mass="92263">MAAGKFASLPRNMPVNHQFPLASSMDLLSSKSPLAERRTDAYQDVSIHGTLPRKKKGPPSIRSCDNAGHSKSPRQSSPLTQDIIQENPLQDRKGENFIFRDPYLLDPTLEYVKFSKERHIMDRTPERLKKELEEELLLSSEDLRSHAWYHGRIPRQVSENLVQRDGDFLVRDSLSSPGNFVLTCQWKNLAQHFKINRTVLRLSEAYSRVQYQFEMESFDSIPGLVRCYVGNRRPISQQSGAIIFQPINRTVPLWCLEERYGTSPGRGREGSLAEGRPDVVKRLSLTTGSSIQAREHSLPRGNLLRNKEKSGSQPACLDHVQDRKALTLKAHQSESHLPIGCKLPPQSPSMDTSPCPSSPVFRTGSEPTLSPALVRRFSSDARTGEALRGSDSQLCPKPPPKPCKVPFLKTPPSPSPWLTSEANYCELNPAFAVGCDRGAKLPMQAHDSHEMLLTAKQNGPSGPRNSGINYMILDGDDQARHWDPLAVQTDEGQEDKTKFVPPLMETVSSFRPNDFESKLLPPENKPLETAMLKHAKELFTNHDARVIAQHMLSVDCKVARILEVSEDRKRSMGVSSGLELITLPHGRQLRLDIIERHNTMAIGIAVDILGCTGTLENRAGTLNKIIQVAVELKDAMGDLYAFSAIMKALEMPQITRLEKTWTALRHHYTQTAILYEKQLKPFSKILHEGRESTYVPASNVSVPLLMPLVTLMERQAVTFEGTDMWENNDESCEILLNHLATARFMAEASESYRMNAERILADFQPDEEMTEILRTEFQMRLLWGSKGAEVNQNERYDKFNQILTALSRKLEPPSGKQAEL</sequence>
<comment type="function">
    <text evidence="1 2 7 8 10 11 12">Acts as an adapter protein downstream of several growth factor receptors to promote cell proliferation, migration, and redistribution of actin fibers (PubMed:12517963). Specifically involved in INS/insulin signaling pathway by mediating MAPK1/ERK2-MAPK3/ERK1 activation and DNA synthesis (By similarity). Promotes insulin-mediated membrane ruffling (By similarity). In response to vasoconstrictor peptide EDN1, involved in the activation of RAP1 downstream of PTK2B via interaction with phosphorylated BCAR1 (PubMed:10896938). Inhibits cell migration and invasion via regulation of TGFB-mediated matrix digestion, actin filament rearrangement, and inhibition of invadopodia activity (PubMed:25499443). May inhibit TGFB-SMAD signaling, via facilitating BCAR1 and SMAD2 and/or SMAD3 interaction (PubMed:25499443). Regulates EGF-induced DNA synthesis (By similarity). Required for the maintenance of ocular lens morphology and structural integrity, potentially via regulation of focal adhesion complex signaling (PubMed:19365570). Acts upstream of PTPRA to regulate the localization of BCAR1 and PTPRA to focal adhesions, via regulation of SRC-mediated phosphorylation of PTPRA (PubMed:22801373). Positively regulates integrin-induced tyrosine phosphorylation of BCAR1 (PubMed:22801373). Acts as a guanine nucleotide exchange factor (GEF) for small GTPases RALA, RAP1A and RRAS (PubMed:10896938). However, in a contrasting study, lacks GEF activity towards RAP1 (By similarity).</text>
</comment>
<comment type="subunit">
    <text evidence="2 6 7 8 9 11">Part of a complex comprised of PTPRA, BCAR1, BCAR3 (via SH2 domain) and SRC; the formation of the complex is dependent on integrin mediated-tyrosine phosphorylation of PTPRA (PubMed:22801373). Within the complex, interacts (via SH2 domain) with PTPRA (when phosphorylated on 'Tyr-825') (PubMed:22801373). Interacts (via Ras-GEF domain) with BCAR1 (PubMed:10438950, PubMed:10896938, PubMed:12517963). Interacts (via Ras-GEF domain) with NEDD9 (PubMed:12517963, PubMed:19103205). Interacts with PTK2B/FAK1 (PubMed:10896938). Interacts with PTPN1. Interacts (via SH2 domain) with EGFR (when tyrosine-phosphorylated) (By similarity).</text>
</comment>
<comment type="subcellular location">
    <subcellularLocation>
        <location evidence="12">Cytoplasm</location>
    </subcellularLocation>
    <subcellularLocation>
        <location evidence="11">Cell junction</location>
        <location evidence="11">Focal adhesion</location>
    </subcellularLocation>
    <text evidence="11">Localization to focal adhesions depends on interaction with PTPRA.</text>
</comment>
<comment type="alternative products">
    <event type="alternative splicing"/>
    <isoform>
        <id>Q9QZK2-1</id>
        <name>1</name>
        <sequence type="displayed"/>
    </isoform>
    <isoform>
        <id>Q9QZK2-2</id>
        <name>2</name>
        <sequence type="described" ref="VSP_017815"/>
    </isoform>
</comment>
<comment type="tissue specificity">
    <text evidence="6 8 10">Abundantly expressed in the lung and brain, with lower expression in splenic lymphocytes and liver (at protein level) (PubMed:19365570). Expressed in splenic lymphocytes (at protein level) (PubMed:19365570). Expressed in the lymph node cortical region, periphery of the splenic white pulp and in alveolar lung fibroblasts (PubMed:19365570). Expressed in epithelial cells in the lens equatorial region and early stage nucleated cortical lens fiber cells (PubMed:19365570). Expressed in the thymus (PubMed:10438950). Expressed in B-cells (PubMed:12517963).</text>
</comment>
<comment type="induction">
    <text evidence="6">Up-regulated by IL1A and LTA, in thymus cortical reticular cell lines.</text>
</comment>
<comment type="domain">
    <text evidence="2 7 11">The SH2 domain mediates interaction with tyrosine-phosphorylated proteins (PubMed:10896938, PubMed:22801373). However, not involved in the binding to phosphorylated BCAR1 (PubMed:10896938). Required for cell cycle progression in response to INS/insulin (By similarity). Required for regulation of EGF-induced DNA synthesis (By similarity).</text>
</comment>
<comment type="domain">
    <text evidence="7">The Ras-GEF domain appears to adopt a closed conformation rendering it incapable of carrying out canonical exchange factor function, this closed conformation is probably required for interaction with BCAR1.</text>
</comment>
<comment type="PTM">
    <text evidence="6">Phosphorylated on tyrosine residues.</text>
</comment>
<comment type="disruption phenotype">
    <text evidence="10">Knockout mice are generally normal and viable (PubMed:19365570). Retinal white circular lesions in anterior chamber derived from the lens cortex (PubMed:19365570). Retinal lens is partially opaque and irregular in structure, with rupture leading to cortical lens fragments floating in the aqueous humor (PubMed:19365570). Abnormally deep anterior chamber with anterior synechiae, ectropion uveae, mild to moderate retinal ganglion loss, and a small pigmented pre-retinal membrane overlying the optic nerve (PubMed:19365570). Reduced phosphorylation of AKT1 and BCAR1 in lens epithelial cells (PubMed:19365570). Retinal lens abnormalities develop progressively postnatally; at postnatal day 3 (P3) there is anterior lens vacuolization and liquefaction of lens cortical fibers (PubMed:19365570). At P24 there is evidence of extensive lens cortex vacuolation and early lens extrusion, progressing to extrusion of lens cortical material at P33 (PubMed:19365570).</text>
</comment>
<comment type="caution">
    <text evidence="2 7">The guanine nucleotide exchange factor (GEF) activity is controversial. One study showed GEF activity towards RALA, RAP1A and RRAS (PubMed:10896938). However, in another study, a construct containing only the Ras-GEF domain lacks GEF activity towards RAP1 (By similarity).</text>
</comment>
<organism>
    <name type="scientific">Mus musculus</name>
    <name type="common">Mouse</name>
    <dbReference type="NCBI Taxonomy" id="10090"/>
    <lineage>
        <taxon>Eukaryota</taxon>
        <taxon>Metazoa</taxon>
        <taxon>Chordata</taxon>
        <taxon>Craniata</taxon>
        <taxon>Vertebrata</taxon>
        <taxon>Euteleostomi</taxon>
        <taxon>Mammalia</taxon>
        <taxon>Eutheria</taxon>
        <taxon>Euarchontoglires</taxon>
        <taxon>Glires</taxon>
        <taxon>Rodentia</taxon>
        <taxon>Myomorpha</taxon>
        <taxon>Muroidea</taxon>
        <taxon>Muridae</taxon>
        <taxon>Murinae</taxon>
        <taxon>Mus</taxon>
        <taxon>Mus</taxon>
    </lineage>
</organism>